<dbReference type="EC" id="3.6.1.10"/>
<dbReference type="EMBL" id="CU329671">
    <property type="protein sequence ID" value="CAC22608.1"/>
    <property type="molecule type" value="Genomic_DNA"/>
</dbReference>
<dbReference type="RefSeq" id="NP_595346.1">
    <property type="nucleotide sequence ID" value="NM_001021254.2"/>
</dbReference>
<dbReference type="SMR" id="Q9C1W8"/>
<dbReference type="BioGRID" id="277655">
    <property type="interactions" value="73"/>
</dbReference>
<dbReference type="FunCoup" id="Q9C1W8">
    <property type="interactions" value="61"/>
</dbReference>
<dbReference type="STRING" id="284812.Q9C1W8"/>
<dbReference type="GlyCosmos" id="Q9C1W8">
    <property type="glycosylation" value="5 sites, No reported glycans"/>
</dbReference>
<dbReference type="iPTMnet" id="Q9C1W8"/>
<dbReference type="PaxDb" id="4896-SPBC713.07c.1"/>
<dbReference type="EnsemblFungi" id="SPBC713.07c.1">
    <property type="protein sequence ID" value="SPBC713.07c.1:pep"/>
    <property type="gene ID" value="SPBC713.07c"/>
</dbReference>
<dbReference type="KEGG" id="spo:2541140"/>
<dbReference type="PomBase" id="SPBC713.07c"/>
<dbReference type="VEuPathDB" id="FungiDB:SPBC713.07c"/>
<dbReference type="eggNOG" id="KOG3770">
    <property type="taxonomic scope" value="Eukaryota"/>
</dbReference>
<dbReference type="HOGENOM" id="CLU_013424_2_0_1"/>
<dbReference type="InParanoid" id="Q9C1W8"/>
<dbReference type="OMA" id="WAERYSV"/>
<dbReference type="PhylomeDB" id="Q9C1W8"/>
<dbReference type="PRO" id="PR:Q9C1W8"/>
<dbReference type="Proteomes" id="UP000002485">
    <property type="component" value="Chromosome II"/>
</dbReference>
<dbReference type="GO" id="GO:0005737">
    <property type="term" value="C:cytoplasm"/>
    <property type="evidence" value="ECO:0007005"/>
    <property type="project" value="PomBase"/>
</dbReference>
<dbReference type="GO" id="GO:0000324">
    <property type="term" value="C:fungal-type vacuole"/>
    <property type="evidence" value="ECO:0000318"/>
    <property type="project" value="GO_Central"/>
</dbReference>
<dbReference type="GO" id="GO:0000329">
    <property type="term" value="C:fungal-type vacuole membrane"/>
    <property type="evidence" value="ECO:0000266"/>
    <property type="project" value="PomBase"/>
</dbReference>
<dbReference type="GO" id="GO:0000298">
    <property type="term" value="F:endopolyphosphatase activity"/>
    <property type="evidence" value="ECO:0000318"/>
    <property type="project" value="GO_Central"/>
</dbReference>
<dbReference type="GO" id="GO:0004309">
    <property type="term" value="F:exopolyphosphatase activity"/>
    <property type="evidence" value="ECO:0000318"/>
    <property type="project" value="GO_Central"/>
</dbReference>
<dbReference type="GO" id="GO:0006112">
    <property type="term" value="P:energy reserve metabolic process"/>
    <property type="evidence" value="ECO:0000305"/>
    <property type="project" value="PomBase"/>
</dbReference>
<dbReference type="GO" id="GO:0006798">
    <property type="term" value="P:polyphosphate catabolic process"/>
    <property type="evidence" value="ECO:0000318"/>
    <property type="project" value="GO_Central"/>
</dbReference>
<dbReference type="CDD" id="cd00842">
    <property type="entry name" value="MPP_ASMase"/>
    <property type="match status" value="1"/>
</dbReference>
<dbReference type="InterPro" id="IPR041805">
    <property type="entry name" value="ASMase/PPN1_MPP"/>
</dbReference>
<dbReference type="InterPro" id="IPR004843">
    <property type="entry name" value="Calcineurin-like_PHP_ApaH"/>
</dbReference>
<dbReference type="InterPro" id="IPR012358">
    <property type="entry name" value="EndopolyPtase_N1"/>
</dbReference>
<dbReference type="InterPro" id="IPR029052">
    <property type="entry name" value="Metallo-depent_PP-like"/>
</dbReference>
<dbReference type="PANTHER" id="PTHR10340:SF55">
    <property type="entry name" value="ENDOPOLYPHOSPHATASE"/>
    <property type="match status" value="1"/>
</dbReference>
<dbReference type="PANTHER" id="PTHR10340">
    <property type="entry name" value="SPHINGOMYELIN PHOSPHODIESTERASE"/>
    <property type="match status" value="1"/>
</dbReference>
<dbReference type="Pfam" id="PF00149">
    <property type="entry name" value="Metallophos"/>
    <property type="match status" value="1"/>
</dbReference>
<dbReference type="PIRSF" id="PIRSF027093">
    <property type="entry name" value="EndopolyPtase_N1"/>
    <property type="match status" value="1"/>
</dbReference>
<dbReference type="SUPFAM" id="SSF56300">
    <property type="entry name" value="Metallo-dependent phosphatases"/>
    <property type="match status" value="1"/>
</dbReference>
<proteinExistence type="inferred from homology"/>
<protein>
    <recommendedName>
        <fullName>Endopolyphosphatase</fullName>
        <ecNumber>3.6.1.10</ecNumber>
    </recommendedName>
</protein>
<reference key="1">
    <citation type="journal article" date="2002" name="Nature">
        <title>The genome sequence of Schizosaccharomyces pombe.</title>
        <authorList>
            <person name="Wood V."/>
            <person name="Gwilliam R."/>
            <person name="Rajandream M.A."/>
            <person name="Lyne M.H."/>
            <person name="Lyne R."/>
            <person name="Stewart A."/>
            <person name="Sgouros J.G."/>
            <person name="Peat N."/>
            <person name="Hayles J."/>
            <person name="Baker S.G."/>
            <person name="Basham D."/>
            <person name="Bowman S."/>
            <person name="Brooks K."/>
            <person name="Brown D."/>
            <person name="Brown S."/>
            <person name="Chillingworth T."/>
            <person name="Churcher C.M."/>
            <person name="Collins M."/>
            <person name="Connor R."/>
            <person name="Cronin A."/>
            <person name="Davis P."/>
            <person name="Feltwell T."/>
            <person name="Fraser A."/>
            <person name="Gentles S."/>
            <person name="Goble A."/>
            <person name="Hamlin N."/>
            <person name="Harris D.E."/>
            <person name="Hidalgo J."/>
            <person name="Hodgson G."/>
            <person name="Holroyd S."/>
            <person name="Hornsby T."/>
            <person name="Howarth S."/>
            <person name="Huckle E.J."/>
            <person name="Hunt S."/>
            <person name="Jagels K."/>
            <person name="James K.D."/>
            <person name="Jones L."/>
            <person name="Jones M."/>
            <person name="Leather S."/>
            <person name="McDonald S."/>
            <person name="McLean J."/>
            <person name="Mooney P."/>
            <person name="Moule S."/>
            <person name="Mungall K.L."/>
            <person name="Murphy L.D."/>
            <person name="Niblett D."/>
            <person name="Odell C."/>
            <person name="Oliver K."/>
            <person name="O'Neil S."/>
            <person name="Pearson D."/>
            <person name="Quail M.A."/>
            <person name="Rabbinowitsch E."/>
            <person name="Rutherford K.M."/>
            <person name="Rutter S."/>
            <person name="Saunders D."/>
            <person name="Seeger K."/>
            <person name="Sharp S."/>
            <person name="Skelton J."/>
            <person name="Simmonds M.N."/>
            <person name="Squares R."/>
            <person name="Squares S."/>
            <person name="Stevens K."/>
            <person name="Taylor K."/>
            <person name="Taylor R.G."/>
            <person name="Tivey A."/>
            <person name="Walsh S.V."/>
            <person name="Warren T."/>
            <person name="Whitehead S."/>
            <person name="Woodward J.R."/>
            <person name="Volckaert G."/>
            <person name="Aert R."/>
            <person name="Robben J."/>
            <person name="Grymonprez B."/>
            <person name="Weltjens I."/>
            <person name="Vanstreels E."/>
            <person name="Rieger M."/>
            <person name="Schaefer M."/>
            <person name="Mueller-Auer S."/>
            <person name="Gabel C."/>
            <person name="Fuchs M."/>
            <person name="Duesterhoeft A."/>
            <person name="Fritzc C."/>
            <person name="Holzer E."/>
            <person name="Moestl D."/>
            <person name="Hilbert H."/>
            <person name="Borzym K."/>
            <person name="Langer I."/>
            <person name="Beck A."/>
            <person name="Lehrach H."/>
            <person name="Reinhardt R."/>
            <person name="Pohl T.M."/>
            <person name="Eger P."/>
            <person name="Zimmermann W."/>
            <person name="Wedler H."/>
            <person name="Wambutt R."/>
            <person name="Purnelle B."/>
            <person name="Goffeau A."/>
            <person name="Cadieu E."/>
            <person name="Dreano S."/>
            <person name="Gloux S."/>
            <person name="Lelaure V."/>
            <person name="Mottier S."/>
            <person name="Galibert F."/>
            <person name="Aves S.J."/>
            <person name="Xiang Z."/>
            <person name="Hunt C."/>
            <person name="Moore K."/>
            <person name="Hurst S.M."/>
            <person name="Lucas M."/>
            <person name="Rochet M."/>
            <person name="Gaillardin C."/>
            <person name="Tallada V.A."/>
            <person name="Garzon A."/>
            <person name="Thode G."/>
            <person name="Daga R.R."/>
            <person name="Cruzado L."/>
            <person name="Jimenez J."/>
            <person name="Sanchez M."/>
            <person name="del Rey F."/>
            <person name="Benito J."/>
            <person name="Dominguez A."/>
            <person name="Revuelta J.L."/>
            <person name="Moreno S."/>
            <person name="Armstrong J."/>
            <person name="Forsburg S.L."/>
            <person name="Cerutti L."/>
            <person name="Lowe T."/>
            <person name="McCombie W.R."/>
            <person name="Paulsen I."/>
            <person name="Potashkin J."/>
            <person name="Shpakovski G.V."/>
            <person name="Ussery D."/>
            <person name="Barrell B.G."/>
            <person name="Nurse P."/>
        </authorList>
    </citation>
    <scope>NUCLEOTIDE SEQUENCE [LARGE SCALE GENOMIC DNA]</scope>
    <source>
        <strain>972 / ATCC 24843</strain>
    </source>
</reference>
<evidence type="ECO:0000250" key="1">
    <source>
        <dbReference type="UniProtKB" id="Q04119"/>
    </source>
</evidence>
<evidence type="ECO:0000255" key="2"/>
<evidence type="ECO:0000256" key="3">
    <source>
        <dbReference type="SAM" id="MobiDB-lite"/>
    </source>
</evidence>
<evidence type="ECO:0000305" key="4"/>
<name>PPN1_SCHPO</name>
<gene>
    <name type="primary">ppn1</name>
    <name type="ORF">SPBC713.07c</name>
</gene>
<accession>Q9C1W8</accession>
<sequence length="577" mass="66026">MRPSVITVAVLFVQSTWASFAFGNPMSMRNKAHTNDLVNSKGKPLVGRFLHITDMHPDIYYEKGSTVDHYCHSYDHNSDDTPLGKSKVGYLSPGPGYECDSSPALIDKTLEWLKEHQDDVLGGIDFILWTGDNSRHDNDNHFPRTQSEILASNEDLVNKMIEAFPDVPIVSAIGNNDIYPHNIMEAGPSSMTRQLAGAWDALIPYEERHTFEKGSYYLCDVIPDKLAAISINTLYLSNKNAAVDGCPDDNLDEPGSLFMRWFKIQLEAYRLKGMKVWLLGHIPPTRGQWYEDCYTSFTDLLYEFRDIIVGQLYGHMNINHFVFLEFDKLPVDTESYGIKSAQPKYVKSLIDAQYAELPTFPENLTEEFLNGTVGNYSLATVGGSIIPEMFPTFRVYEYNISDIANQLDDREELTEITSFNWETLEEQSQSDYEIDKKKKKKKKNNKKKKKNKRKNIKPGPLGPAYVPSLFTPISFKQYFLNTSNYMDATKDTEISYELLYTSKDSPYNMPDLTVPEYMRLAKRIATCDKPEDPHQFKLQSGDQNTFRISKKKKPSICPIAYTYLWHAYIGSISDFED</sequence>
<comment type="function">
    <text evidence="1">Catalyzes the hydrolysis of inorganic polyphosphate (polyP) chains of many hundreds of phosphate residues into shorter lengths.</text>
</comment>
<comment type="catalytic activity">
    <reaction evidence="1">
        <text>[phosphate](n+1) + n H2O = (n+1) phosphate + n H(+)</text>
        <dbReference type="Rhea" id="RHEA:22452"/>
        <dbReference type="Rhea" id="RHEA-COMP:14280"/>
        <dbReference type="ChEBI" id="CHEBI:15377"/>
        <dbReference type="ChEBI" id="CHEBI:15378"/>
        <dbReference type="ChEBI" id="CHEBI:16838"/>
        <dbReference type="ChEBI" id="CHEBI:43474"/>
        <dbReference type="EC" id="3.6.1.10"/>
    </reaction>
</comment>
<comment type="cofactor">
    <cofactor evidence="1">
        <name>a divalent metal cation</name>
        <dbReference type="ChEBI" id="CHEBI:60240"/>
    </cofactor>
</comment>
<comment type="subcellular location">
    <subcellularLocation>
        <location evidence="1">Vacuole membrane</location>
        <topology evidence="1">Single-pass type II membrane protein</topology>
    </subcellularLocation>
</comment>
<comment type="PTM">
    <text evidence="1">Processing by proteases in the vacuole may be required for activation.</text>
</comment>
<comment type="similarity">
    <text evidence="4">Belongs to the endopolyphosphatase PPN1 family.</text>
</comment>
<organism>
    <name type="scientific">Schizosaccharomyces pombe (strain 972 / ATCC 24843)</name>
    <name type="common">Fission yeast</name>
    <dbReference type="NCBI Taxonomy" id="284812"/>
    <lineage>
        <taxon>Eukaryota</taxon>
        <taxon>Fungi</taxon>
        <taxon>Dikarya</taxon>
        <taxon>Ascomycota</taxon>
        <taxon>Taphrinomycotina</taxon>
        <taxon>Schizosaccharomycetes</taxon>
        <taxon>Schizosaccharomycetales</taxon>
        <taxon>Schizosaccharomycetaceae</taxon>
        <taxon>Schizosaccharomyces</taxon>
    </lineage>
</organism>
<feature type="chain" id="PRO_0000058549" description="Endopolyphosphatase">
    <location>
        <begin position="1"/>
        <end position="577"/>
    </location>
</feature>
<feature type="topological domain" description="Cytoplasmic" evidence="2">
    <location>
        <begin position="1"/>
        <end position="2"/>
    </location>
</feature>
<feature type="transmembrane region" description="Helical; Signal-anchor for type II membrane protein" evidence="2">
    <location>
        <begin position="3"/>
        <end position="23"/>
    </location>
</feature>
<feature type="topological domain" description="Vacuolar" evidence="2">
    <location>
        <begin position="24"/>
        <end position="577"/>
    </location>
</feature>
<feature type="region of interest" description="Disordered" evidence="3">
    <location>
        <begin position="430"/>
        <end position="460"/>
    </location>
</feature>
<feature type="compositionally biased region" description="Basic residues" evidence="3">
    <location>
        <begin position="437"/>
        <end position="456"/>
    </location>
</feature>
<feature type="glycosylation site" description="N-linked (GlcNAc...) asparagine" evidence="2">
    <location>
        <position position="363"/>
    </location>
</feature>
<feature type="glycosylation site" description="N-linked (GlcNAc...) asparagine" evidence="2">
    <location>
        <position position="370"/>
    </location>
</feature>
<feature type="glycosylation site" description="N-linked (GlcNAc...) asparagine" evidence="2">
    <location>
        <position position="375"/>
    </location>
</feature>
<feature type="glycosylation site" description="N-linked (GlcNAc...) asparagine" evidence="2">
    <location>
        <position position="399"/>
    </location>
</feature>
<feature type="glycosylation site" description="N-linked (GlcNAc...) asparagine" evidence="2">
    <location>
        <position position="481"/>
    </location>
</feature>
<keyword id="KW-0325">Glycoprotein</keyword>
<keyword id="KW-0378">Hydrolase</keyword>
<keyword id="KW-0472">Membrane</keyword>
<keyword id="KW-1185">Reference proteome</keyword>
<keyword id="KW-0735">Signal-anchor</keyword>
<keyword id="KW-0812">Transmembrane</keyword>
<keyword id="KW-1133">Transmembrane helix</keyword>
<keyword id="KW-0926">Vacuole</keyword>